<accession>Q62B16</accession>
<dbReference type="EMBL" id="CP000011">
    <property type="protein sequence ID" value="AAU46023.1"/>
    <property type="molecule type" value="Genomic_DNA"/>
</dbReference>
<dbReference type="RefSeq" id="WP_004187505.1">
    <property type="nucleotide sequence ID" value="NC_006349.2"/>
</dbReference>
<dbReference type="RefSeq" id="YP_106112.1">
    <property type="nucleotide sequence ID" value="NC_006349.2"/>
</dbReference>
<dbReference type="SMR" id="Q62B16"/>
<dbReference type="GeneID" id="92975838"/>
<dbReference type="KEGG" id="bma:BMAA1521"/>
<dbReference type="PATRIC" id="fig|243160.12.peg.5097"/>
<dbReference type="eggNOG" id="ENOG5032XT2">
    <property type="taxonomic scope" value="Bacteria"/>
</dbReference>
<dbReference type="HOGENOM" id="CLU_531773_0_0_4"/>
<dbReference type="Proteomes" id="UP000006693">
    <property type="component" value="Chromosome 2"/>
</dbReference>
<dbReference type="GO" id="GO:0005615">
    <property type="term" value="C:extracellular space"/>
    <property type="evidence" value="ECO:0007669"/>
    <property type="project" value="InterPro"/>
</dbReference>
<dbReference type="Gene3D" id="4.10.1330.10">
    <property type="entry name" value="non globular Virulence effector SptP domain"/>
    <property type="match status" value="1"/>
</dbReference>
<dbReference type="InterPro" id="IPR011070">
    <property type="entry name" value="Globular_prot_asu/bsu"/>
</dbReference>
<dbReference type="InterPro" id="IPR015203">
    <property type="entry name" value="SptP_N"/>
</dbReference>
<dbReference type="InterPro" id="IPR044899">
    <property type="entry name" value="SptP_N_sf"/>
</dbReference>
<dbReference type="Pfam" id="PF09119">
    <property type="entry name" value="SicP-binding"/>
    <property type="match status" value="1"/>
</dbReference>
<dbReference type="SUPFAM" id="SSF56568">
    <property type="entry name" value="Non-globular alpha+beta subunits of globular proteins"/>
    <property type="match status" value="1"/>
</dbReference>
<name>BOPA_BURMA</name>
<comment type="function">
    <text evidence="1">Plays a role in mediating bacterial evasion from the host autophagic pathway.</text>
</comment>
<comment type="subcellular location">
    <subcellularLocation>
        <location evidence="1">Secreted</location>
    </subcellularLocation>
    <text evidence="1">Secreted via the bsa type III secretion system.</text>
</comment>
<comment type="similarity">
    <text evidence="3">Belongs to the BopA/IcsB family.</text>
</comment>
<feature type="chain" id="PRO_0000344019" description="Effector protein BopA">
    <location>
        <begin position="1"/>
        <end position="512"/>
    </location>
</feature>
<feature type="coiled-coil region" evidence="2">
    <location>
        <begin position="347"/>
        <end position="377"/>
    </location>
</feature>
<organism>
    <name type="scientific">Burkholderia mallei (strain ATCC 23344)</name>
    <dbReference type="NCBI Taxonomy" id="243160"/>
    <lineage>
        <taxon>Bacteria</taxon>
        <taxon>Pseudomonadati</taxon>
        <taxon>Pseudomonadota</taxon>
        <taxon>Betaproteobacteria</taxon>
        <taxon>Burkholderiales</taxon>
        <taxon>Burkholderiaceae</taxon>
        <taxon>Burkholderia</taxon>
        <taxon>pseudomallei group</taxon>
    </lineage>
</organism>
<reference key="1">
    <citation type="journal article" date="2004" name="Proc. Natl. Acad. Sci. U.S.A.">
        <title>Structural flexibility in the Burkholderia mallei genome.</title>
        <authorList>
            <person name="Nierman W.C."/>
            <person name="DeShazer D."/>
            <person name="Kim H.S."/>
            <person name="Tettelin H."/>
            <person name="Nelson K.E."/>
            <person name="Feldblyum T.V."/>
            <person name="Ulrich R.L."/>
            <person name="Ronning C.M."/>
            <person name="Brinkac L.M."/>
            <person name="Daugherty S.C."/>
            <person name="Davidsen T.D."/>
            <person name="DeBoy R.T."/>
            <person name="Dimitrov G."/>
            <person name="Dodson R.J."/>
            <person name="Durkin A.S."/>
            <person name="Gwinn M.L."/>
            <person name="Haft D.H."/>
            <person name="Khouri H.M."/>
            <person name="Kolonay J.F."/>
            <person name="Madupu R."/>
            <person name="Mohammoud Y."/>
            <person name="Nelson W.C."/>
            <person name="Radune D."/>
            <person name="Romero C.M."/>
            <person name="Sarria S."/>
            <person name="Selengut J."/>
            <person name="Shamblin C."/>
            <person name="Sullivan S.A."/>
            <person name="White O."/>
            <person name="Yu Y."/>
            <person name="Zafar N."/>
            <person name="Zhou L."/>
            <person name="Fraser C.M."/>
        </authorList>
    </citation>
    <scope>NUCLEOTIDE SEQUENCE [LARGE SCALE GENOMIC DNA]</scope>
    <source>
        <strain>ATCC 23344</strain>
    </source>
</reference>
<protein>
    <recommendedName>
        <fullName>Effector protein BopA</fullName>
    </recommendedName>
</protein>
<proteinExistence type="inferred from homology"/>
<sequence>MINVGAFVASARSGARVVVGGDARGPVVSAARLGMKERLFAFLAHVPLLKHCDAVRRYAEQVRMENRRSLEVFVLALSKRYGPEGAKAAFDYGARRDGAPLDQRRVRNMVSIAEHFHGTGDAKPLARQMVFRSWECRGLDHPGHASLTIKNQADADAGRHVYEHVSWWPNQRLGSKEHFDRIEPKTLDGYRIDKRSEISSATEQRLREGDAARRKILADGFKYANQDERHDALFFPRAGQKLDKDAEWGLSARKVYFPAIGFNHDRRDTDRPRAFVLFGLNEAAMLRDARTVKEGAKSGELKYRMISKKENCASMALRVLRAGGAEHFVPYTAAWISEDPNHAHAYALAVQARIDALNQRRADVERRCERLRDSASVRQAWRAFSEAGGASASPLAEDAGRGRASAHMRQARLDEHAREVERIGAYFAELSAGRSGKHRDRADADLADAMKRCAPSARDDVAALTRKASVLVETLGRHLDAPPPSDSSALRRLAAHAMIGRIEAFMAAAIAA</sequence>
<gene>
    <name type="primary">bopA</name>
    <name type="ordered locus">BMAA1521</name>
</gene>
<keyword id="KW-0175">Coiled coil</keyword>
<keyword id="KW-1185">Reference proteome</keyword>
<keyword id="KW-0964">Secreted</keyword>
<keyword id="KW-0843">Virulence</keyword>
<evidence type="ECO:0000250" key="1"/>
<evidence type="ECO:0000255" key="2"/>
<evidence type="ECO:0000305" key="3"/>